<gene>
    <name type="primary">DANCR</name>
    <name type="synonym">ANCR</name>
    <name type="synonym">KIAA0114</name>
    <name type="synonym">SNHG13</name>
</gene>
<sequence length="163" mass="16785">MAGPVPPHPGLAVRAAALHPAPLRIFPGLAELPDLSRGSAARPALAQSLPGIGCGPRDPPASLPAPRRLSGLCARRRSQASLSAGVARADAPLCSGFRAGHACGTGTQPQPTLSSRSSSLTSAEVQLPQFLAQVDNYRHKPLKLECPVAGISIDLSQLSLQLQ</sequence>
<proteinExistence type="uncertain"/>
<dbReference type="EMBL" id="CH471057">
    <property type="protein sequence ID" value="EAX05436.1"/>
    <property type="molecule type" value="Genomic_DNA"/>
</dbReference>
<dbReference type="EMBL" id="CH471057">
    <property type="protein sequence ID" value="EAX05437.1"/>
    <property type="molecule type" value="Genomic_DNA"/>
</dbReference>
<dbReference type="EMBL" id="AV698133">
    <property type="status" value="NOT_ANNOTATED_CDS"/>
    <property type="molecule type" value="mRNA"/>
</dbReference>
<dbReference type="EMBL" id="BC045566">
    <property type="status" value="NOT_ANNOTATED_CDS"/>
    <property type="molecule type" value="mRNA"/>
</dbReference>
<dbReference type="EMBL" id="D28589">
    <property type="status" value="NOT_ANNOTATED_CDS"/>
    <property type="molecule type" value="mRNA"/>
</dbReference>
<dbReference type="GlyGen" id="P0C864">
    <property type="glycosylation" value="2 sites, 1 O-linked glycan (2 sites)"/>
</dbReference>
<dbReference type="BioMuta" id="HGNC:28964"/>
<dbReference type="MassIVE" id="P0C864"/>
<dbReference type="ProteomicsDB" id="52400"/>
<dbReference type="AGR" id="HGNC:28964"/>
<dbReference type="GeneCards" id="DANCR"/>
<dbReference type="HGNC" id="HGNC:28964">
    <property type="gene designation" value="DANCR"/>
</dbReference>
<dbReference type="MIM" id="614625">
    <property type="type" value="gene"/>
</dbReference>
<dbReference type="neXtProt" id="NX_P0C864"/>
<dbReference type="InParanoid" id="P0C864"/>
<dbReference type="PAN-GO" id="P0C864">
    <property type="GO annotations" value="0 GO annotations based on evolutionary models"/>
</dbReference>
<dbReference type="ChiTaRS" id="DANCR">
    <property type="organism name" value="human"/>
</dbReference>
<dbReference type="Pharos" id="P0C864">
    <property type="development level" value="Tdark"/>
</dbReference>
<dbReference type="Proteomes" id="UP000005640">
    <property type="component" value="Unplaced"/>
</dbReference>
<dbReference type="RNAct" id="P0C864">
    <property type="molecule type" value="protein"/>
</dbReference>
<name>DANCR_HUMAN</name>
<feature type="chain" id="PRO_0000348926" description="Putative uncharacterized protein DANCR">
    <location>
        <begin position="1"/>
        <end position="163"/>
    </location>
</feature>
<feature type="sequence conflict" description="In Ref. 2; AV698133." evidence="2" ref="2">
    <original>P</original>
    <variation>L</variation>
    <location>
        <position position="66"/>
    </location>
</feature>
<feature type="sequence conflict" description="In Ref. 3; BC045566." evidence="2" ref="3">
    <original>L</original>
    <variation>V</variation>
    <location>
        <position position="82"/>
    </location>
</feature>
<keyword id="KW-1185">Reference proteome</keyword>
<protein>
    <recommendedName>
        <fullName>Putative uncharacterized protein DANCR</fullName>
    </recommendedName>
    <alternativeName>
        <fullName>Anti-differentiation ncRNA protein</fullName>
    </alternativeName>
    <alternativeName>
        <fullName>Differentiation antagonizing non-protein coding RNA</fullName>
    </alternativeName>
    <alternativeName>
        <fullName>Small nucleolar RNA host gene protein 13</fullName>
    </alternativeName>
</protein>
<reference key="1">
    <citation type="submission" date="2005-07" db="EMBL/GenBank/DDBJ databases">
        <authorList>
            <person name="Mural R.J."/>
            <person name="Istrail S."/>
            <person name="Sutton G.G."/>
            <person name="Florea L."/>
            <person name="Halpern A.L."/>
            <person name="Mobarry C.M."/>
            <person name="Lippert R."/>
            <person name="Walenz B."/>
            <person name="Shatkay H."/>
            <person name="Dew I."/>
            <person name="Miller J.R."/>
            <person name="Flanigan M.J."/>
            <person name="Edwards N.J."/>
            <person name="Bolanos R."/>
            <person name="Fasulo D."/>
            <person name="Halldorsson B.V."/>
            <person name="Hannenhalli S."/>
            <person name="Turner R."/>
            <person name="Yooseph S."/>
            <person name="Lu F."/>
            <person name="Nusskern D.R."/>
            <person name="Shue B.C."/>
            <person name="Zheng X.H."/>
            <person name="Zhong F."/>
            <person name="Delcher A.L."/>
            <person name="Huson D.H."/>
            <person name="Kravitz S.A."/>
            <person name="Mouchard L."/>
            <person name="Reinert K."/>
            <person name="Remington K.A."/>
            <person name="Clark A.G."/>
            <person name="Waterman M.S."/>
            <person name="Eichler E.E."/>
            <person name="Adams M.D."/>
            <person name="Hunkapiller M.W."/>
            <person name="Myers E.W."/>
            <person name="Venter J.C."/>
        </authorList>
    </citation>
    <scope>NUCLEOTIDE SEQUENCE [LARGE SCALE GENOMIC DNA]</scope>
</reference>
<reference key="2">
    <citation type="journal article" date="2001" name="Proc. Natl. Acad. Sci. U.S.A.">
        <title>Insight into hepatocellular carcinogenesis at transcriptome level by comparing gene expression profiles of hepatocellular carcinoma with those of corresponding noncancerous liver.</title>
        <authorList>
            <person name="Xu X.R."/>
            <person name="Huang J."/>
            <person name="Xu Z.G."/>
            <person name="Qian B.Z."/>
            <person name="Zhu Z.D."/>
            <person name="Yan Q."/>
            <person name="Cai T."/>
            <person name="Zhang X."/>
            <person name="Xiao H.S."/>
            <person name="Qu J."/>
            <person name="Liu F."/>
            <person name="Huang Q.H."/>
            <person name="Cheng Z.H."/>
            <person name="Li N.G."/>
            <person name="Du J.J."/>
            <person name="Hu W."/>
            <person name="Shen K.T."/>
            <person name="Lu G."/>
            <person name="Fu G."/>
            <person name="Zhong M."/>
            <person name="Xu S.H."/>
            <person name="Gu W.Y."/>
            <person name="Huang W."/>
            <person name="Zhao X.T."/>
            <person name="Hu G.X."/>
            <person name="Gu J.R."/>
            <person name="Chen Z."/>
            <person name="Han Z.G."/>
        </authorList>
    </citation>
    <scope>NUCLEOTIDE SEQUENCE [LARGE SCALE MRNA] OF 66-163</scope>
    <source>
        <tissue>Hepatoma</tissue>
    </source>
</reference>
<reference key="3">
    <citation type="journal article" date="2004" name="Genome Res.">
        <title>The status, quality, and expansion of the NIH full-length cDNA project: the Mammalian Gene Collection (MGC).</title>
        <authorList>
            <consortium name="The MGC Project Team"/>
        </authorList>
    </citation>
    <scope>NUCLEOTIDE SEQUENCE [LARGE SCALE MRNA] OF 81-163</scope>
    <source>
        <tissue>Hippocampus</tissue>
    </source>
</reference>
<reference key="4">
    <citation type="journal article" date="1995" name="DNA Res.">
        <title>Prediction of the coding sequences of unidentified human genes. III. The coding sequences of 40 new genes (KIAA0081-KIAA0120) deduced by analysis of cDNA clones from human cell line KG-1.</title>
        <authorList>
            <person name="Nagase T."/>
            <person name="Miyajima N."/>
            <person name="Tanaka A."/>
            <person name="Sazuka T."/>
            <person name="Seki N."/>
            <person name="Sato S."/>
            <person name="Tabata S."/>
            <person name="Ishikawa K."/>
            <person name="Kawarabayasi Y."/>
            <person name="Kotani H."/>
            <person name="Nomura N."/>
        </authorList>
    </citation>
    <scope>NUCLEOTIDE SEQUENCE [LARGE SCALE MRNA] OF 85-163</scope>
    <source>
        <tissue>Bone marrow</tissue>
    </source>
</reference>
<reference key="5">
    <citation type="journal article" date="2012" name="Genes Dev.">
        <title>Suppression of progenitor differentiation requires the long noncoding RNA ANCR.</title>
        <authorList>
            <person name="Kretz M."/>
            <person name="Webster D.E."/>
            <person name="Flockhart R.J."/>
            <person name="Lee C.S."/>
            <person name="Zehnder A."/>
            <person name="Lopez-Pajares V."/>
            <person name="Qu K."/>
            <person name="Zheng G.X."/>
            <person name="Chow J."/>
            <person name="Kim G.E."/>
            <person name="Rinn J.L."/>
            <person name="Chang H.Y."/>
            <person name="Siprashvili Z."/>
            <person name="Khavari P.A."/>
        </authorList>
    </citation>
    <scope>TISSUE SPECIFICITY</scope>
</reference>
<organism>
    <name type="scientific">Homo sapiens</name>
    <name type="common">Human</name>
    <dbReference type="NCBI Taxonomy" id="9606"/>
    <lineage>
        <taxon>Eukaryota</taxon>
        <taxon>Metazoa</taxon>
        <taxon>Chordata</taxon>
        <taxon>Craniata</taxon>
        <taxon>Vertebrata</taxon>
        <taxon>Euteleostomi</taxon>
        <taxon>Mammalia</taxon>
        <taxon>Eutheria</taxon>
        <taxon>Euarchontoglires</taxon>
        <taxon>Primates</taxon>
        <taxon>Haplorrhini</taxon>
        <taxon>Catarrhini</taxon>
        <taxon>Hominidae</taxon>
        <taxon>Homo</taxon>
    </lineage>
</organism>
<accession>P0C864</accession>
<accession>A0A024RD90</accession>
<evidence type="ECO:0000269" key="1">
    <source>
    </source>
</evidence>
<evidence type="ECO:0000305" key="2"/>
<evidence type="ECO:0000305" key="3">
    <source>
    </source>
</evidence>
<comment type="tissue specificity">
    <text evidence="1">Expressed in keratinocytes.</text>
</comment>
<comment type="caution">
    <text evidence="3">Product of a dubious CDS prediction. May be a non-coding RNA (PubMed:22302877).</text>
</comment>